<proteinExistence type="evidence at protein level"/>
<gene>
    <name type="primary">PRKCA</name>
</gene>
<organism>
    <name type="scientific">Bos taurus</name>
    <name type="common">Bovine</name>
    <dbReference type="NCBI Taxonomy" id="9913"/>
    <lineage>
        <taxon>Eukaryota</taxon>
        <taxon>Metazoa</taxon>
        <taxon>Chordata</taxon>
        <taxon>Craniata</taxon>
        <taxon>Vertebrata</taxon>
        <taxon>Euteleostomi</taxon>
        <taxon>Mammalia</taxon>
        <taxon>Eutheria</taxon>
        <taxon>Laurasiatheria</taxon>
        <taxon>Artiodactyla</taxon>
        <taxon>Ruminantia</taxon>
        <taxon>Pecora</taxon>
        <taxon>Bovidae</taxon>
        <taxon>Bovinae</taxon>
        <taxon>Bos</taxon>
    </lineage>
</organism>
<reference key="1">
    <citation type="journal article" date="1986" name="Science">
        <title>The complete primary structure of protein kinase C -- the major phorbol ester receptor.</title>
        <authorList>
            <person name="Parker P.J."/>
            <person name="Coussens L."/>
            <person name="Totty N."/>
            <person name="Rhee L."/>
            <person name="Young S."/>
            <person name="Chen E."/>
            <person name="Stabel S."/>
            <person name="Waterfield M.D."/>
            <person name="Ullrich A."/>
        </authorList>
    </citation>
    <scope>NUCLEOTIDE SEQUENCE [MRNA]</scope>
    <source>
        <tissue>Brain</tissue>
    </source>
</reference>
<reference key="2">
    <citation type="journal article" date="1988" name="Nature">
        <title>The molecular heterogeneity of protein kinase C and its implications for cellular regulation.</title>
        <authorList>
            <person name="Nishizuka Y."/>
        </authorList>
    </citation>
    <scope>REVIEW</scope>
</reference>
<reference key="3">
    <citation type="journal article" date="1993" name="J. Biol. Chem.">
        <title>Identification of the phosphorylated region responsible for the permissive activation of protein kinase C.</title>
        <authorList>
            <person name="Cazaubon S.M."/>
            <person name="Parker P.J."/>
        </authorList>
    </citation>
    <scope>MUTAGENESIS OF THR-494; THR-495 AND THR-497</scope>
    <scope>PHOSPHORYLATION AT THR-494; THR-495 AND THR-497</scope>
</reference>
<reference key="4">
    <citation type="journal article" date="1997" name="J. Biol. Chem.">
        <title>Phosphorylation of protein kinase C-alpha on serine 657 controls the accumulation of active enzyme and contributes to its phosphatase-resistant state.</title>
        <authorList>
            <person name="Bornancin F."/>
            <person name="Parker P.J."/>
        </authorList>
    </citation>
    <scope>PHOSPHORYLATION AT SER-657</scope>
</reference>
<protein>
    <recommendedName>
        <fullName>Protein kinase C alpha type</fullName>
        <shortName>PKC-A</shortName>
        <shortName>PKC-alpha</shortName>
        <ecNumber evidence="4">2.7.11.13</ecNumber>
    </recommendedName>
</protein>
<accession>P04409</accession>
<dbReference type="EC" id="2.7.11.13" evidence="4"/>
<dbReference type="EMBL" id="M13973">
    <property type="protein sequence ID" value="AAA30706.1"/>
    <property type="molecule type" value="mRNA"/>
</dbReference>
<dbReference type="PIR" id="A00621">
    <property type="entry name" value="KIBOC"/>
</dbReference>
<dbReference type="RefSeq" id="NP_776860.1">
    <property type="nucleotide sequence ID" value="NM_174435.1"/>
</dbReference>
<dbReference type="BMRB" id="P04409"/>
<dbReference type="SMR" id="P04409"/>
<dbReference type="BioGRID" id="159290">
    <property type="interactions" value="2"/>
</dbReference>
<dbReference type="DIP" id="DIP-530N"/>
<dbReference type="FunCoup" id="P04409">
    <property type="interactions" value="1244"/>
</dbReference>
<dbReference type="MINT" id="P04409"/>
<dbReference type="STRING" id="9913.ENSBTAP00000001407"/>
<dbReference type="BindingDB" id="P04409"/>
<dbReference type="ChEMBL" id="CHEMBL2213"/>
<dbReference type="iPTMnet" id="P04409"/>
<dbReference type="PaxDb" id="9913-ENSBTAP00000001407"/>
<dbReference type="GeneID" id="282001"/>
<dbReference type="KEGG" id="bta:282001"/>
<dbReference type="CTD" id="5578"/>
<dbReference type="eggNOG" id="KOG0696">
    <property type="taxonomic scope" value="Eukaryota"/>
</dbReference>
<dbReference type="InParanoid" id="P04409"/>
<dbReference type="OrthoDB" id="63267at2759"/>
<dbReference type="BRENDA" id="2.7.11.13">
    <property type="organism ID" value="908"/>
</dbReference>
<dbReference type="PRO" id="PR:P04409"/>
<dbReference type="Proteomes" id="UP000009136">
    <property type="component" value="Unplaced"/>
</dbReference>
<dbReference type="GO" id="GO:0005737">
    <property type="term" value="C:cytoplasm"/>
    <property type="evidence" value="ECO:0000250"/>
    <property type="project" value="UniProtKB"/>
</dbReference>
<dbReference type="GO" id="GO:0005829">
    <property type="term" value="C:cytosol"/>
    <property type="evidence" value="ECO:0000250"/>
    <property type="project" value="UniProtKB"/>
</dbReference>
<dbReference type="GO" id="GO:0031966">
    <property type="term" value="C:mitochondrial membrane"/>
    <property type="evidence" value="ECO:0007669"/>
    <property type="project" value="UniProtKB-SubCell"/>
</dbReference>
<dbReference type="GO" id="GO:0005634">
    <property type="term" value="C:nucleus"/>
    <property type="evidence" value="ECO:0007669"/>
    <property type="project" value="UniProtKB-SubCell"/>
</dbReference>
<dbReference type="GO" id="GO:0048471">
    <property type="term" value="C:perinuclear region of cytoplasm"/>
    <property type="evidence" value="ECO:0000250"/>
    <property type="project" value="UniProtKB"/>
</dbReference>
<dbReference type="GO" id="GO:0097381">
    <property type="term" value="C:photoreceptor disc membrane"/>
    <property type="evidence" value="ECO:0000304"/>
    <property type="project" value="Reactome"/>
</dbReference>
<dbReference type="GO" id="GO:0005886">
    <property type="term" value="C:plasma membrane"/>
    <property type="evidence" value="ECO:0000250"/>
    <property type="project" value="UniProtKB"/>
</dbReference>
<dbReference type="GO" id="GO:0005524">
    <property type="term" value="F:ATP binding"/>
    <property type="evidence" value="ECO:0007669"/>
    <property type="project" value="UniProtKB-KW"/>
</dbReference>
<dbReference type="GO" id="GO:0004698">
    <property type="term" value="F:calcium,diacylglycerol-dependent serine/threonine kinase activity"/>
    <property type="evidence" value="ECO:0000314"/>
    <property type="project" value="BHF-UCL"/>
</dbReference>
<dbReference type="GO" id="GO:0030165">
    <property type="term" value="F:PDZ domain binding"/>
    <property type="evidence" value="ECO:0000315"/>
    <property type="project" value="UniProtKB"/>
</dbReference>
<dbReference type="GO" id="GO:0106310">
    <property type="term" value="F:protein serine kinase activity"/>
    <property type="evidence" value="ECO:0007669"/>
    <property type="project" value="RHEA"/>
</dbReference>
<dbReference type="GO" id="GO:0004674">
    <property type="term" value="F:protein serine/threonine kinase activity"/>
    <property type="evidence" value="ECO:0000318"/>
    <property type="project" value="GO_Central"/>
</dbReference>
<dbReference type="GO" id="GO:0097110">
    <property type="term" value="F:scaffold protein binding"/>
    <property type="evidence" value="ECO:0000353"/>
    <property type="project" value="BHF-UCL"/>
</dbReference>
<dbReference type="GO" id="GO:0008270">
    <property type="term" value="F:zinc ion binding"/>
    <property type="evidence" value="ECO:0007669"/>
    <property type="project" value="UniProtKB-KW"/>
</dbReference>
<dbReference type="GO" id="GO:0001525">
    <property type="term" value="P:angiogenesis"/>
    <property type="evidence" value="ECO:0007669"/>
    <property type="project" value="UniProtKB-KW"/>
</dbReference>
<dbReference type="GO" id="GO:0006915">
    <property type="term" value="P:apoptotic process"/>
    <property type="evidence" value="ECO:0007669"/>
    <property type="project" value="UniProtKB-KW"/>
</dbReference>
<dbReference type="GO" id="GO:0007155">
    <property type="term" value="P:cell adhesion"/>
    <property type="evidence" value="ECO:0007669"/>
    <property type="project" value="UniProtKB-KW"/>
</dbReference>
<dbReference type="GO" id="GO:0035556">
    <property type="term" value="P:intracellular signal transduction"/>
    <property type="evidence" value="ECO:0000318"/>
    <property type="project" value="GO_Central"/>
</dbReference>
<dbReference type="GO" id="GO:0034351">
    <property type="term" value="P:negative regulation of glial cell apoptotic process"/>
    <property type="evidence" value="ECO:0000250"/>
    <property type="project" value="UniProtKB"/>
</dbReference>
<dbReference type="GO" id="GO:0106071">
    <property type="term" value="P:positive regulation of adenylate cyclase-activating G protein-coupled receptor signaling pathway"/>
    <property type="evidence" value="ECO:0000314"/>
    <property type="project" value="BHF-UCL"/>
</dbReference>
<dbReference type="GO" id="GO:0045766">
    <property type="term" value="P:positive regulation of angiogenesis"/>
    <property type="evidence" value="ECO:0000250"/>
    <property type="project" value="UniProtKB"/>
</dbReference>
<dbReference type="GO" id="GO:0010613">
    <property type="term" value="P:positive regulation of cardiac muscle hypertrophy"/>
    <property type="evidence" value="ECO:0000250"/>
    <property type="project" value="UniProtKB"/>
</dbReference>
<dbReference type="GO" id="GO:0045785">
    <property type="term" value="P:positive regulation of cell adhesion"/>
    <property type="evidence" value="ECO:0000250"/>
    <property type="project" value="UniProtKB"/>
</dbReference>
<dbReference type="GO" id="GO:0030335">
    <property type="term" value="P:positive regulation of cell migration"/>
    <property type="evidence" value="ECO:0000250"/>
    <property type="project" value="UniProtKB"/>
</dbReference>
<dbReference type="GO" id="GO:2000707">
    <property type="term" value="P:positive regulation of dense core granule biogenesis"/>
    <property type="evidence" value="ECO:0000250"/>
    <property type="project" value="UniProtKB"/>
</dbReference>
<dbReference type="GO" id="GO:0010595">
    <property type="term" value="P:positive regulation of endothelial cell migration"/>
    <property type="evidence" value="ECO:0000250"/>
    <property type="project" value="UniProtKB"/>
</dbReference>
<dbReference type="GO" id="GO:0001938">
    <property type="term" value="P:positive regulation of endothelial cell proliferation"/>
    <property type="evidence" value="ECO:0000250"/>
    <property type="project" value="UniProtKB"/>
</dbReference>
<dbReference type="GO" id="GO:0070374">
    <property type="term" value="P:positive regulation of ERK1 and ERK2 cascade"/>
    <property type="evidence" value="ECO:0000250"/>
    <property type="project" value="UniProtKB"/>
</dbReference>
<dbReference type="GO" id="GO:0031666">
    <property type="term" value="P:positive regulation of lipopolysaccharide-mediated signaling pathway"/>
    <property type="evidence" value="ECO:0000250"/>
    <property type="project" value="UniProtKB"/>
</dbReference>
<dbReference type="GO" id="GO:0045651">
    <property type="term" value="P:positive regulation of macrophage differentiation"/>
    <property type="evidence" value="ECO:0000250"/>
    <property type="project" value="UniProtKB"/>
</dbReference>
<dbReference type="GO" id="GO:0045931">
    <property type="term" value="P:positive regulation of mitotic cell cycle"/>
    <property type="evidence" value="ECO:0000250"/>
    <property type="project" value="UniProtKB"/>
</dbReference>
<dbReference type="GO" id="GO:0090330">
    <property type="term" value="P:regulation of platelet aggregation"/>
    <property type="evidence" value="ECO:0000250"/>
    <property type="project" value="UniProtKB"/>
</dbReference>
<dbReference type="CDD" id="cd20833">
    <property type="entry name" value="C1_cPKC_rpt1"/>
    <property type="match status" value="1"/>
</dbReference>
<dbReference type="CDD" id="cd20836">
    <property type="entry name" value="C1_cPKC_rpt2"/>
    <property type="match status" value="1"/>
</dbReference>
<dbReference type="CDD" id="cd04026">
    <property type="entry name" value="C2_PKC_alpha_gamma"/>
    <property type="match status" value="1"/>
</dbReference>
<dbReference type="CDD" id="cd05615">
    <property type="entry name" value="STKc_cPKC_alpha"/>
    <property type="match status" value="1"/>
</dbReference>
<dbReference type="FunFam" id="2.60.40.150:FF:000012">
    <property type="entry name" value="Kinase C alpha type"/>
    <property type="match status" value="1"/>
</dbReference>
<dbReference type="FunFam" id="1.10.510.10:FF:000023">
    <property type="entry name" value="Protein kinase C"/>
    <property type="match status" value="1"/>
</dbReference>
<dbReference type="FunFam" id="3.30.200.20:FF:000080">
    <property type="entry name" value="Protein kinase C"/>
    <property type="match status" value="1"/>
</dbReference>
<dbReference type="FunFam" id="3.30.200.20:FF:000103">
    <property type="entry name" value="Protein kinase C"/>
    <property type="match status" value="1"/>
</dbReference>
<dbReference type="FunFam" id="3.30.60.20:FF:000006">
    <property type="entry name" value="Protein kinase C"/>
    <property type="match status" value="1"/>
</dbReference>
<dbReference type="FunFam" id="3.30.60.20:FF:000031">
    <property type="entry name" value="Protein kinase C alpha"/>
    <property type="match status" value="1"/>
</dbReference>
<dbReference type="Gene3D" id="3.30.60.20">
    <property type="match status" value="2"/>
</dbReference>
<dbReference type="Gene3D" id="2.60.40.150">
    <property type="entry name" value="C2 domain"/>
    <property type="match status" value="1"/>
</dbReference>
<dbReference type="Gene3D" id="3.30.200.20">
    <property type="entry name" value="Phosphorylase Kinase, domain 1"/>
    <property type="match status" value="2"/>
</dbReference>
<dbReference type="Gene3D" id="1.10.510.10">
    <property type="entry name" value="Transferase(Phosphotransferase) domain 1"/>
    <property type="match status" value="1"/>
</dbReference>
<dbReference type="InterPro" id="IPR000961">
    <property type="entry name" value="AGC-kinase_C"/>
</dbReference>
<dbReference type="InterPro" id="IPR046349">
    <property type="entry name" value="C1-like_sf"/>
</dbReference>
<dbReference type="InterPro" id="IPR000008">
    <property type="entry name" value="C2_dom"/>
</dbReference>
<dbReference type="InterPro" id="IPR035892">
    <property type="entry name" value="C2_domain_sf"/>
</dbReference>
<dbReference type="InterPro" id="IPR034663">
    <property type="entry name" value="cPKC_alpha"/>
</dbReference>
<dbReference type="InterPro" id="IPR020454">
    <property type="entry name" value="DAG/PE-bd"/>
</dbReference>
<dbReference type="InterPro" id="IPR011009">
    <property type="entry name" value="Kinase-like_dom_sf"/>
</dbReference>
<dbReference type="InterPro" id="IPR002219">
    <property type="entry name" value="PE/DAG-bd"/>
</dbReference>
<dbReference type="InterPro" id="IPR017892">
    <property type="entry name" value="Pkinase_C"/>
</dbReference>
<dbReference type="InterPro" id="IPR000719">
    <property type="entry name" value="Prot_kinase_dom"/>
</dbReference>
<dbReference type="InterPro" id="IPR017441">
    <property type="entry name" value="Protein_kinase_ATP_BS"/>
</dbReference>
<dbReference type="InterPro" id="IPR014375">
    <property type="entry name" value="Protein_kinase_C_a/b/g"/>
</dbReference>
<dbReference type="InterPro" id="IPR008271">
    <property type="entry name" value="Ser/Thr_kinase_AS"/>
</dbReference>
<dbReference type="PANTHER" id="PTHR24351">
    <property type="entry name" value="RIBOSOMAL PROTEIN S6 KINASE"/>
    <property type="match status" value="1"/>
</dbReference>
<dbReference type="Pfam" id="PF00130">
    <property type="entry name" value="C1_1"/>
    <property type="match status" value="2"/>
</dbReference>
<dbReference type="Pfam" id="PF00168">
    <property type="entry name" value="C2"/>
    <property type="match status" value="1"/>
</dbReference>
<dbReference type="Pfam" id="PF00069">
    <property type="entry name" value="Pkinase"/>
    <property type="match status" value="1"/>
</dbReference>
<dbReference type="Pfam" id="PF00433">
    <property type="entry name" value="Pkinase_C"/>
    <property type="match status" value="1"/>
</dbReference>
<dbReference type="PIRSF" id="PIRSF000550">
    <property type="entry name" value="PKC_alpha"/>
    <property type="match status" value="1"/>
</dbReference>
<dbReference type="PRINTS" id="PR00360">
    <property type="entry name" value="C2DOMAIN"/>
</dbReference>
<dbReference type="PRINTS" id="PR00008">
    <property type="entry name" value="DAGPEDOMAIN"/>
</dbReference>
<dbReference type="SMART" id="SM00109">
    <property type="entry name" value="C1"/>
    <property type="match status" value="2"/>
</dbReference>
<dbReference type="SMART" id="SM00239">
    <property type="entry name" value="C2"/>
    <property type="match status" value="1"/>
</dbReference>
<dbReference type="SMART" id="SM00133">
    <property type="entry name" value="S_TK_X"/>
    <property type="match status" value="1"/>
</dbReference>
<dbReference type="SMART" id="SM00220">
    <property type="entry name" value="S_TKc"/>
    <property type="match status" value="1"/>
</dbReference>
<dbReference type="SUPFAM" id="SSF49562">
    <property type="entry name" value="C2 domain (Calcium/lipid-binding domain, CaLB)"/>
    <property type="match status" value="1"/>
</dbReference>
<dbReference type="SUPFAM" id="SSF57889">
    <property type="entry name" value="Cysteine-rich domain"/>
    <property type="match status" value="2"/>
</dbReference>
<dbReference type="SUPFAM" id="SSF56112">
    <property type="entry name" value="Protein kinase-like (PK-like)"/>
    <property type="match status" value="1"/>
</dbReference>
<dbReference type="PROSITE" id="PS51285">
    <property type="entry name" value="AGC_KINASE_CTER"/>
    <property type="match status" value="1"/>
</dbReference>
<dbReference type="PROSITE" id="PS50004">
    <property type="entry name" value="C2"/>
    <property type="match status" value="1"/>
</dbReference>
<dbReference type="PROSITE" id="PS00107">
    <property type="entry name" value="PROTEIN_KINASE_ATP"/>
    <property type="match status" value="1"/>
</dbReference>
<dbReference type="PROSITE" id="PS50011">
    <property type="entry name" value="PROTEIN_KINASE_DOM"/>
    <property type="match status" value="1"/>
</dbReference>
<dbReference type="PROSITE" id="PS00108">
    <property type="entry name" value="PROTEIN_KINASE_ST"/>
    <property type="match status" value="1"/>
</dbReference>
<dbReference type="PROSITE" id="PS00479">
    <property type="entry name" value="ZF_DAG_PE_1"/>
    <property type="match status" value="2"/>
</dbReference>
<dbReference type="PROSITE" id="PS50081">
    <property type="entry name" value="ZF_DAG_PE_2"/>
    <property type="match status" value="2"/>
</dbReference>
<sequence>MADVFPAAEPAAPQDVANRFARKGALRQKNVHEVKNHRFIARFFKQPTFCSHCTDFIWGFGKQGFQCQVCCFVVHKRCHEFVTFSCPGADKGPDTDDPRSKHKFKIHTYGSPTFCDHCGSLLYGLIHQGMKCDTCDMNVHKQCVINVPSLCGMDHTEKRGRIYLKAEVTDEKLHVTVRDAKNLIPMDPNGLSDPYVKLKLIPDPKNESKQKTKTIRSTLNPRWDESFTFKLKPSDKDRRLSEEIWDWDRTTRNDFMGSLSFGVSELMKMPASGWYKLLNQEEGEYYNVPIPEGDEEGNVELRQKFEKAKLGPAGNKVISPSEDRRQPSNNLDRVKLTDFNFLMVLGKGSFGKVMLADRKGTEELYAIKILKKDVVIQDDDVECTMVEKRVLALLDKPPFLTQLHSCFQTVDRLYFVMEYVNGGDLMYHIQQVGKFKEPQAVFYAAEISIGLFFLHKRGIIYRDLKLDNVMLDSEGHIKIADFGMCKEHMMDGVTTRTFCGTPDYIAPEIIAYQPYGKSVDWWAYGVLLYEMLAGQPPFDGEDEDELFQSIMEHNVSYPKSLSKEAVSICKGLMTKHPGKRLGCGPEGERDVREHAFFRRIDWEKLENREIQPPFKPKVCGKGAENFDKFFTRGQPVLTPPDQLVIANIDQSDFEGFSYVNPQFVHPILQSAV</sequence>
<name>KPCA_BOVIN</name>
<keyword id="KW-0007">Acetylation</keyword>
<keyword id="KW-0037">Angiogenesis</keyword>
<keyword id="KW-0053">Apoptosis</keyword>
<keyword id="KW-0067">ATP-binding</keyword>
<keyword id="KW-0106">Calcium</keyword>
<keyword id="KW-0130">Cell adhesion</keyword>
<keyword id="KW-1003">Cell membrane</keyword>
<keyword id="KW-0963">Cytoplasm</keyword>
<keyword id="KW-0418">Kinase</keyword>
<keyword id="KW-0472">Membrane</keyword>
<keyword id="KW-0479">Metal-binding</keyword>
<keyword id="KW-0496">Mitochondrion</keyword>
<keyword id="KW-0547">Nucleotide-binding</keyword>
<keyword id="KW-0539">Nucleus</keyword>
<keyword id="KW-0597">Phosphoprotein</keyword>
<keyword id="KW-1185">Reference proteome</keyword>
<keyword id="KW-0677">Repeat</keyword>
<keyword id="KW-0723">Serine/threonine-protein kinase</keyword>
<keyword id="KW-0808">Transferase</keyword>
<keyword id="KW-0862">Zinc</keyword>
<keyword id="KW-0863">Zinc-finger</keyword>
<comment type="function">
    <text evidence="4 5">Calcium-activated, phospholipid- and diacylglycerol (DAG)-dependent serine/threonine-protein kinase that is involved in positive and negative regulation of cell proliferation, apoptosis, differentiation, migration and adhesion, cardiac hypertrophy, angiogenesis, platelet function and inflammation, by directly phosphorylating targets such as RAF1, BCL2, CSPG4, TNNT2/CTNT, or activating signaling cascades involving MAPK1/3 (ERK1/2) and RAP1GAP. Depending on the cell type, is involved in cell proliferation and cell growth arrest by positive and negative regulation of the cell cycle. Can promote cell growth by phosphorylating and activating RAF1, which mediates the activation of the MAPK/ERK signaling cascade, and/or by up-regulating CDKN1A, which facilitates active cyclin-dependent kinase (CDK) complex formation. In cells stimulated by the phorbol ester PMA, can trigger a cell cycle arrest program which is associated with the accumulation of the hyper-phosphorylated growth-suppressive form of RB1 and induction of the CDK inhibitors CDKN1A and CDKN1B. Depending on the cell type, exhibits anti-apoptotic function and protects cells from apoptosis by suppressing the p53/TP53-mediated activation of IGFBP3, or mediates anti-apoptotic action by phosphorylating BCL2. During macrophage differentiation induced by macrophage colony-stimulating factor (CSF1), is translocated to the nucleus and is associated with macrophage development. After wounding, translocates from focal contacts to lamellipodia and participates in the modulation of desmosomal adhesion. Plays a role in cell motility by phosphorylating CSPG4, which induces association of CSPG4 with extensive lamellipodia at the cell periphery and polarization of the cell accompanied by increases in cell motility. During chemokine-induced CD4(+) T cell migration, phosphorylates CDC42-guanine exchange factor DOCK8 resulting in its dissociation from LRCH1 and the activation of GTPase CDC42. Negatively regulates myocardial contractility and positively regulates angiogenesis, platelet aggregation and thrombus formation in arteries. Mediates hypertrophic growth of neonatal cardiomyocytes, in part through a MAPK1/3 (ERK1/2)-dependent signaling pathway, and upon PMA treatment, is required to induce cardiomyocyte hypertrophy up to heart failure and death, by increasing protein synthesis, protein-DNA ratio and cell surface area. Regulates cardiomyocyte function by phosphorylating cardiac troponin T (TNNT2/CTNT), which induces significant reduction in actomyosin ATPase activity, myofilament calcium sensitivity and myocardial contractility. In angiogenesis, is required for full endothelial cell migration, adhesion to vitronectin (VTN), and vascular endothelial growth factor A (VEGFA)-dependent regulation of kinase activation and vascular tube formation. Involved in the stabilization of VEGFA mRNA at post-transcriptional level and mediates VEGFA-induced cell proliferation. In the regulation of calcium-induced platelet aggregation, mediates signals from the CD36/GP4 receptor for granule release, and activates the integrin heterodimer ITGA2B-ITGB3 through the RAP1GAP pathway for adhesion. During response to lipopolysaccharides (LPS), may regulate selective LPS-induced macrophage functions involved in host defense and inflammation. But in some inflammatory responses, may negatively regulate NF-kappa-B-induced genes, through IL1A-dependent induction of NF-kappa-B inhibitor alpha (NFKBIA/IKBA). Upon stimulation with 12-O-tetradecanoylphorbol-13-acetate (TPA), phosphorylates EIF4G1, which modulates EIF4G1 binding to MKNK1 and may be involved in the regulation of EIF4E phosphorylation. Phosphorylates KIT, leading to inhibition of KIT activity. Phosphorylates ATF2 which promotes cooperation between ATF2 and JUN, activating transcription (By similarity). Phosphorylates SOCS2 at 'Ser-52' facilitating its ubiquitination and proteasomal degradation (By similarity). Phosphorylates KLHL3 in response to angiotensin II signaling, decreasing the interaction between KLHL3 and WNK4 (By similarity). Phosphorylates and activates LRRK1, which phosphorylates RAB proteins involved in intracellular trafficking (By similarity).</text>
</comment>
<comment type="catalytic activity">
    <reaction evidence="4">
        <text>L-seryl-[protein] + ATP = O-phospho-L-seryl-[protein] + ADP + H(+)</text>
        <dbReference type="Rhea" id="RHEA:17989"/>
        <dbReference type="Rhea" id="RHEA-COMP:9863"/>
        <dbReference type="Rhea" id="RHEA-COMP:11604"/>
        <dbReference type="ChEBI" id="CHEBI:15378"/>
        <dbReference type="ChEBI" id="CHEBI:29999"/>
        <dbReference type="ChEBI" id="CHEBI:30616"/>
        <dbReference type="ChEBI" id="CHEBI:83421"/>
        <dbReference type="ChEBI" id="CHEBI:456216"/>
        <dbReference type="EC" id="2.7.11.13"/>
    </reaction>
</comment>
<comment type="catalytic activity">
    <reaction evidence="4">
        <text>L-threonyl-[protein] + ATP = O-phospho-L-threonyl-[protein] + ADP + H(+)</text>
        <dbReference type="Rhea" id="RHEA:46608"/>
        <dbReference type="Rhea" id="RHEA-COMP:11060"/>
        <dbReference type="Rhea" id="RHEA-COMP:11605"/>
        <dbReference type="ChEBI" id="CHEBI:15378"/>
        <dbReference type="ChEBI" id="CHEBI:30013"/>
        <dbReference type="ChEBI" id="CHEBI:30616"/>
        <dbReference type="ChEBI" id="CHEBI:61977"/>
        <dbReference type="ChEBI" id="CHEBI:456216"/>
        <dbReference type="EC" id="2.7.11.13"/>
    </reaction>
</comment>
<comment type="cofactor">
    <cofactor evidence="8">
        <name>Ca(2+)</name>
        <dbReference type="ChEBI" id="CHEBI:29108"/>
    </cofactor>
    <text evidence="2">Binds 3 Ca(2+) ions per subunit. The ions are bound to the C2 domain.</text>
</comment>
<comment type="activity regulation">
    <text>Classical (or conventional) PKCs (PRKCA, PRKCB and PRKCG) are activated by calcium and diacylglycerol (DAG) in the presence of phosphatidylserine. Three specific sites; Thr-497 (activation loop of the kinase domain), Thr-638 (turn motif) and Ser-657 (hydrophobic region), need to be phosphorylated for its full activation.</text>
</comment>
<comment type="subunit">
    <text evidence="2 4 5">Interacts with ADAP1/CENTA1, CSPG4 and PRKCABP. Binds to CAVIN2 in the presence of phosphatidylserine. Interacts with PICK1 (via PDZ domain). Interacts with TRIM41. Recruited in a circadian manner into a nuclear complex which also includes BMAL1 and RACK1. Interacts with PARD3 (By similarity). Interacts with SOCS2 (By similarity).</text>
</comment>
<comment type="subcellular location">
    <subcellularLocation>
        <location evidence="1">Cytoplasm</location>
    </subcellularLocation>
    <subcellularLocation>
        <location evidence="1">Cell membrane</location>
        <topology evidence="1">Peripheral membrane protein</topology>
    </subcellularLocation>
    <subcellularLocation>
        <location evidence="1">Mitochondrion membrane</location>
        <topology evidence="1">Peripheral membrane protein</topology>
    </subcellularLocation>
    <subcellularLocation>
        <location evidence="1">Nucleus</location>
    </subcellularLocation>
</comment>
<comment type="PTM">
    <text evidence="4">In response to growth factors, phosphorylated at Ser-657 by the mTORC2 complex, promoting autophosphorylation and activation of PRKCE.</text>
</comment>
<comment type="similarity">
    <text evidence="15">Belongs to the protein kinase superfamily. AGC Ser/Thr protein kinase family. PKC subfamily.</text>
</comment>
<evidence type="ECO:0000250" key="1"/>
<evidence type="ECO:0000250" key="2">
    <source>
        <dbReference type="UniProtKB" id="P05696"/>
    </source>
</evidence>
<evidence type="ECO:0000250" key="3">
    <source>
        <dbReference type="UniProtKB" id="P05771"/>
    </source>
</evidence>
<evidence type="ECO:0000250" key="4">
    <source>
        <dbReference type="UniProtKB" id="P17252"/>
    </source>
</evidence>
<evidence type="ECO:0000250" key="5">
    <source>
        <dbReference type="UniProtKB" id="P20444"/>
    </source>
</evidence>
<evidence type="ECO:0000250" key="6">
    <source>
        <dbReference type="UniProtKB" id="P68403"/>
    </source>
</evidence>
<evidence type="ECO:0000255" key="7"/>
<evidence type="ECO:0000255" key="8">
    <source>
        <dbReference type="PROSITE-ProRule" id="PRU00041"/>
    </source>
</evidence>
<evidence type="ECO:0000255" key="9">
    <source>
        <dbReference type="PROSITE-ProRule" id="PRU00159"/>
    </source>
</evidence>
<evidence type="ECO:0000255" key="10">
    <source>
        <dbReference type="PROSITE-ProRule" id="PRU00226"/>
    </source>
</evidence>
<evidence type="ECO:0000255" key="11">
    <source>
        <dbReference type="PROSITE-ProRule" id="PRU00618"/>
    </source>
</evidence>
<evidence type="ECO:0000255" key="12">
    <source>
        <dbReference type="PROSITE-ProRule" id="PRU10027"/>
    </source>
</evidence>
<evidence type="ECO:0000269" key="13">
    <source>
    </source>
</evidence>
<evidence type="ECO:0000269" key="14">
    <source>
    </source>
</evidence>
<evidence type="ECO:0000305" key="15"/>
<evidence type="ECO:0000305" key="16">
    <source>
    </source>
</evidence>
<feature type="initiator methionine" description="Removed" evidence="4">
    <location>
        <position position="1"/>
    </location>
</feature>
<feature type="chain" id="PRO_0000055678" description="Protein kinase C alpha type">
    <location>
        <begin position="2"/>
        <end position="672"/>
    </location>
</feature>
<feature type="domain" description="C2" evidence="8">
    <location>
        <begin position="158"/>
        <end position="275"/>
    </location>
</feature>
<feature type="domain" description="Protein kinase" evidence="9">
    <location>
        <begin position="339"/>
        <end position="597"/>
    </location>
</feature>
<feature type="domain" description="AGC-kinase C-terminal" evidence="11">
    <location>
        <begin position="598"/>
        <end position="668"/>
    </location>
</feature>
<feature type="zinc finger region" description="Phorbol-ester/DAG-type 1" evidence="10">
    <location>
        <begin position="36"/>
        <end position="86"/>
    </location>
</feature>
<feature type="zinc finger region" description="Phorbol-ester/DAG-type 2" evidence="10">
    <location>
        <begin position="101"/>
        <end position="151"/>
    </location>
</feature>
<feature type="active site" description="Proton acceptor" evidence="9 12">
    <location>
        <position position="463"/>
    </location>
</feature>
<feature type="binding site" evidence="2">
    <location>
        <position position="186"/>
    </location>
    <ligand>
        <name>Ca(2+)</name>
        <dbReference type="ChEBI" id="CHEBI:29108"/>
        <label>1</label>
    </ligand>
</feature>
<feature type="binding site" evidence="2">
    <location>
        <position position="187"/>
    </location>
    <ligand>
        <name>Ca(2+)</name>
        <dbReference type="ChEBI" id="CHEBI:29108"/>
        <label>1</label>
    </ligand>
</feature>
<feature type="binding site" evidence="2">
    <location>
        <position position="187"/>
    </location>
    <ligand>
        <name>Ca(2+)</name>
        <dbReference type="ChEBI" id="CHEBI:29108"/>
        <label>2</label>
    </ligand>
</feature>
<feature type="binding site" evidence="2">
    <location>
        <position position="193"/>
    </location>
    <ligand>
        <name>Ca(2+)</name>
        <dbReference type="ChEBI" id="CHEBI:29108"/>
        <label>2</label>
    </ligand>
</feature>
<feature type="binding site" evidence="2">
    <location>
        <position position="195"/>
    </location>
    <ligand>
        <name>a 1,2-diacyl-sn-glycero-3-phospho-(1D-myo-inositol-4,5-bisphosphate)</name>
        <dbReference type="ChEBI" id="CHEBI:58456"/>
    </ligand>
</feature>
<feature type="binding site" evidence="2">
    <location>
        <position position="245"/>
    </location>
    <ligand>
        <name>a 1,2-diacyl-sn-glycero-3-phospho-(1D-myo-inositol-4,5-bisphosphate)</name>
        <dbReference type="ChEBI" id="CHEBI:58456"/>
    </ligand>
</feature>
<feature type="binding site" evidence="2">
    <location>
        <position position="246"/>
    </location>
    <ligand>
        <name>Ca(2+)</name>
        <dbReference type="ChEBI" id="CHEBI:29108"/>
        <label>1</label>
    </ligand>
</feature>
<feature type="binding site" evidence="2">
    <location>
        <position position="246"/>
    </location>
    <ligand>
        <name>Ca(2+)</name>
        <dbReference type="ChEBI" id="CHEBI:29108"/>
        <label>2</label>
    </ligand>
</feature>
<feature type="binding site" evidence="2">
    <location>
        <position position="247"/>
    </location>
    <ligand>
        <name>Ca(2+)</name>
        <dbReference type="ChEBI" id="CHEBI:29108"/>
        <label>2</label>
    </ligand>
</feature>
<feature type="binding site" evidence="2">
    <location>
        <position position="248"/>
    </location>
    <ligand>
        <name>Ca(2+)</name>
        <dbReference type="ChEBI" id="CHEBI:29108"/>
        <label>1</label>
    </ligand>
</feature>
<feature type="binding site" evidence="2">
    <location>
        <position position="248"/>
    </location>
    <ligand>
        <name>Ca(2+)</name>
        <dbReference type="ChEBI" id="CHEBI:29108"/>
        <label>2</label>
    </ligand>
</feature>
<feature type="binding site" evidence="2">
    <location>
        <position position="248"/>
    </location>
    <ligand>
        <name>Ca(2+)</name>
        <dbReference type="ChEBI" id="CHEBI:29108"/>
        <label>3</label>
    </ligand>
</feature>
<feature type="binding site" evidence="2">
    <location>
        <position position="252"/>
    </location>
    <ligand>
        <name>Ca(2+)</name>
        <dbReference type="ChEBI" id="CHEBI:29108"/>
        <label>3</label>
    </ligand>
</feature>
<feature type="binding site" evidence="2">
    <location>
        <position position="254"/>
    </location>
    <ligand>
        <name>Ca(2+)</name>
        <dbReference type="ChEBI" id="CHEBI:29108"/>
        <label>1</label>
    </ligand>
</feature>
<feature type="binding site" evidence="2">
    <location>
        <position position="254"/>
    </location>
    <ligand>
        <name>Ca(2+)</name>
        <dbReference type="ChEBI" id="CHEBI:29108"/>
        <label>3</label>
    </ligand>
</feature>
<feature type="binding site" evidence="9">
    <location>
        <begin position="345"/>
        <end position="353"/>
    </location>
    <ligand>
        <name>ATP</name>
        <dbReference type="ChEBI" id="CHEBI:30616"/>
    </ligand>
</feature>
<feature type="binding site" evidence="9">
    <location>
        <position position="368"/>
    </location>
    <ligand>
        <name>ATP</name>
        <dbReference type="ChEBI" id="CHEBI:30616"/>
    </ligand>
</feature>
<feature type="modified residue" description="N-acetylalanine" evidence="4">
    <location>
        <position position="2"/>
    </location>
</feature>
<feature type="modified residue" description="Phosphoserine" evidence="4">
    <location>
        <position position="226"/>
    </location>
</feature>
<feature type="modified residue" description="Phosphoserine" evidence="2">
    <location>
        <position position="319"/>
    </location>
</feature>
<feature type="modified residue" description="Phosphothreonine" evidence="16">
    <location>
        <position position="494"/>
    </location>
</feature>
<feature type="modified residue" description="Phosphothreonine" evidence="16">
    <location>
        <position position="495"/>
    </location>
</feature>
<feature type="modified residue" description="Phosphothreonine; by PDPK1" evidence="16">
    <location>
        <position position="497"/>
    </location>
</feature>
<feature type="modified residue" description="Phosphothreonine" evidence="3">
    <location>
        <position position="501"/>
    </location>
</feature>
<feature type="modified residue" description="N6-acetyllysine" evidence="4">
    <location>
        <position position="628"/>
    </location>
</feature>
<feature type="modified residue" description="Phosphothreonine; by autocatalysis" evidence="6 7">
    <location>
        <position position="631"/>
    </location>
</feature>
<feature type="modified residue" description="Phosphothreonine; by autocatalysis" evidence="4">
    <location>
        <position position="638"/>
    </location>
</feature>
<feature type="modified residue" description="Phosphoserine" evidence="4">
    <location>
        <position position="651"/>
    </location>
</feature>
<feature type="modified residue" description="Phosphoserine" evidence="14">
    <location>
        <position position="657"/>
    </location>
</feature>
<feature type="modified residue" description="Phosphotyrosine; by SYK" evidence="5">
    <location>
        <position position="658"/>
    </location>
</feature>
<feature type="mutagenesis site" description="Abolishes phosphorylation and catalytic activity; when associated with A-495 and A-497." evidence="13">
    <original>T</original>
    <variation>A</variation>
    <location>
        <position position="494"/>
    </location>
</feature>
<feature type="mutagenesis site" description="Abolishes phosphorylation and catalytic activity; when associated with A-494 and A-497." evidence="13">
    <original>T</original>
    <variation>A</variation>
    <location>
        <position position="495"/>
    </location>
</feature>
<feature type="mutagenesis site" description="Abolishes phosphorylation and catalytic activity; when associated with A-494 and A-495." evidence="13">
    <original>T</original>
    <variation>A</variation>
    <location>
        <position position="497"/>
    </location>
</feature>